<proteinExistence type="inferred from homology"/>
<reference key="1">
    <citation type="journal article" date="1992" name="Mol. Biol. Evol.">
        <title>Mitochondrial DNA phylogeny of the Old-World monkey tribe Papionini.</title>
        <authorList>
            <person name="Disotell T.R."/>
            <person name="Honeycutt R.L."/>
            <person name="Ruvolo M."/>
        </authorList>
    </citation>
    <scope>NUCLEOTIDE SEQUENCE [GENOMIC DNA]</scope>
</reference>
<reference key="2">
    <citation type="journal article" date="1998" name="J. Mol. Evol.">
        <title>Molecular timing of primate divergences as estimated by two nonprimate calibration points.</title>
        <authorList>
            <person name="Arnason U."/>
            <person name="Gullberg A."/>
            <person name="Janke A."/>
        </authorList>
    </citation>
    <scope>NUCLEOTIDE SEQUENCE [GENOMIC DNA]</scope>
</reference>
<geneLocation type="mitochondrion"/>
<feature type="chain" id="PRO_0000183650" description="Cytochrome c oxidase subunit 2">
    <location>
        <begin position="1"/>
        <end position="227"/>
    </location>
</feature>
<feature type="topological domain" description="Mitochondrial intermembrane" evidence="3">
    <location>
        <begin position="1"/>
        <end position="14"/>
    </location>
</feature>
<feature type="transmembrane region" description="Helical; Name=I" evidence="3">
    <location>
        <begin position="15"/>
        <end position="45"/>
    </location>
</feature>
<feature type="topological domain" description="Mitochondrial matrix" evidence="3">
    <location>
        <begin position="46"/>
        <end position="59"/>
    </location>
</feature>
<feature type="transmembrane region" description="Helical; Name=II" evidence="3">
    <location>
        <begin position="60"/>
        <end position="87"/>
    </location>
</feature>
<feature type="topological domain" description="Mitochondrial intermembrane" evidence="3">
    <location>
        <begin position="88"/>
        <end position="227"/>
    </location>
</feature>
<feature type="binding site" evidence="3">
    <location>
        <position position="161"/>
    </location>
    <ligand>
        <name>Cu cation</name>
        <dbReference type="ChEBI" id="CHEBI:23378"/>
        <label>A1</label>
    </ligand>
</feature>
<feature type="binding site" evidence="3">
    <location>
        <position position="196"/>
    </location>
    <ligand>
        <name>Cu cation</name>
        <dbReference type="ChEBI" id="CHEBI:23378"/>
        <label>A1</label>
    </ligand>
</feature>
<feature type="binding site" evidence="3">
    <location>
        <position position="196"/>
    </location>
    <ligand>
        <name>Cu cation</name>
        <dbReference type="ChEBI" id="CHEBI:23378"/>
        <label>A2</label>
    </ligand>
</feature>
<feature type="binding site" evidence="3">
    <location>
        <position position="198"/>
    </location>
    <ligand>
        <name>Cu cation</name>
        <dbReference type="ChEBI" id="CHEBI:23378"/>
        <label>A2</label>
    </ligand>
</feature>
<feature type="binding site" evidence="3">
    <location>
        <position position="198"/>
    </location>
    <ligand>
        <name>Mg(2+)</name>
        <dbReference type="ChEBI" id="CHEBI:18420"/>
        <note>ligand shared with MT-CO1</note>
    </ligand>
</feature>
<feature type="binding site" evidence="3">
    <location>
        <position position="200"/>
    </location>
    <ligand>
        <name>Cu cation</name>
        <dbReference type="ChEBI" id="CHEBI:23378"/>
        <label>A1</label>
    </ligand>
</feature>
<feature type="binding site" evidence="3">
    <location>
        <position position="200"/>
    </location>
    <ligand>
        <name>Cu cation</name>
        <dbReference type="ChEBI" id="CHEBI:23378"/>
        <label>A2</label>
    </ligand>
</feature>
<feature type="binding site" evidence="3">
    <location>
        <position position="204"/>
    </location>
    <ligand>
        <name>Cu cation</name>
        <dbReference type="ChEBI" id="CHEBI:23378"/>
        <label>A2</label>
    </ligand>
</feature>
<feature type="binding site" evidence="3">
    <location>
        <position position="207"/>
    </location>
    <ligand>
        <name>Cu cation</name>
        <dbReference type="ChEBI" id="CHEBI:23378"/>
        <label>A1</label>
    </ligand>
</feature>
<feature type="sequence conflict" description="In Ref. 2; CAA76997." evidence="4" ref="2">
    <original>H</original>
    <variation>L</variation>
    <location>
        <position position="24"/>
    </location>
</feature>
<feature type="sequence conflict" description="In Ref. 2; CAA76997." evidence="4" ref="2">
    <original>N</original>
    <variation>F</variation>
    <location>
        <position position="140"/>
    </location>
</feature>
<organism>
    <name type="scientific">Papio hamadryas</name>
    <name type="common">Hamadryas baboon</name>
    <dbReference type="NCBI Taxonomy" id="9557"/>
    <lineage>
        <taxon>Eukaryota</taxon>
        <taxon>Metazoa</taxon>
        <taxon>Chordata</taxon>
        <taxon>Craniata</taxon>
        <taxon>Vertebrata</taxon>
        <taxon>Euteleostomi</taxon>
        <taxon>Mammalia</taxon>
        <taxon>Eutheria</taxon>
        <taxon>Euarchontoglires</taxon>
        <taxon>Primates</taxon>
        <taxon>Haplorrhini</taxon>
        <taxon>Catarrhini</taxon>
        <taxon>Cercopithecidae</taxon>
        <taxon>Cercopithecinae</taxon>
        <taxon>Papio</taxon>
    </lineage>
</organism>
<comment type="function">
    <text evidence="2">Component of the cytochrome c oxidase, the last enzyme in the mitochondrial electron transport chain which drives oxidative phosphorylation. The respiratory chain contains 3 multisubunit complexes succinate dehydrogenase (complex II, CII), ubiquinol-cytochrome c oxidoreductase (cytochrome b-c1 complex, complex III, CIII) and cytochrome c oxidase (complex IV, CIV), that cooperate to transfer electrons derived from NADH and succinate to molecular oxygen, creating an electrochemical gradient over the inner membrane that drives transmembrane transport and the ATP synthase. Cytochrome c oxidase is the component of the respiratory chain that catalyzes the reduction of oxygen to water. Electrons originating from reduced cytochrome c in the intermembrane space (IMS) are transferred via the dinuclear copper A center (CU(A)) of subunit 2 and heme A of subunit 1 to the active site in subunit 1, a binuclear center (BNC) formed by heme A3 and copper B (CU(B)). The BNC reduces molecular oxygen to 2 water molecules using 4 electrons from cytochrome c in the IMS and 4 protons from the mitochondrial matrix.</text>
</comment>
<comment type="catalytic activity">
    <reaction evidence="2">
        <text>4 Fe(II)-[cytochrome c] + O2 + 8 H(+)(in) = 4 Fe(III)-[cytochrome c] + 2 H2O + 4 H(+)(out)</text>
        <dbReference type="Rhea" id="RHEA:11436"/>
        <dbReference type="Rhea" id="RHEA-COMP:10350"/>
        <dbReference type="Rhea" id="RHEA-COMP:14399"/>
        <dbReference type="ChEBI" id="CHEBI:15377"/>
        <dbReference type="ChEBI" id="CHEBI:15378"/>
        <dbReference type="ChEBI" id="CHEBI:15379"/>
        <dbReference type="ChEBI" id="CHEBI:29033"/>
        <dbReference type="ChEBI" id="CHEBI:29034"/>
        <dbReference type="EC" id="7.1.1.9"/>
    </reaction>
    <physiologicalReaction direction="left-to-right" evidence="2">
        <dbReference type="Rhea" id="RHEA:11437"/>
    </physiologicalReaction>
</comment>
<comment type="cofactor">
    <cofactor evidence="3">
        <name>Cu cation</name>
        <dbReference type="ChEBI" id="CHEBI:23378"/>
    </cofactor>
    <text evidence="3">Binds a dinuclear copper A center per subunit.</text>
</comment>
<comment type="subunit">
    <text evidence="1 3">Component of the cytochrome c oxidase (complex IV, CIV), a multisubunit enzyme composed of 14 subunits. The complex is composed of a catalytic core of 3 subunits MT-CO1, MT-CO2 and MT-CO3, encoded in the mitochondrial DNA, and 11 supernumerary subunits COX4I, COX5A, COX5B, COX6A, COX6B, COX6C, COX7A, COX7B, COX7C, COX8 and NDUFA4, which are encoded in the nuclear genome. The complex exists as a monomer or a dimer and forms supercomplexes (SCs) in the inner mitochondrial membrane with NADH-ubiquinone oxidoreductase (complex I, CI) and ubiquinol-cytochrome c oxidoreductase (cytochrome b-c1 complex, complex III, CIII), resulting in different assemblies (supercomplex SCI(1)III(2)IV(1) and megacomplex MCI(2)III(2)IV(2)) (By similarity). Found in a complex with TMEM177, COA6, COX18, COX20, SCO1 and SCO2. Interacts with TMEM177 in a COX20-dependent manner. Interacts with COX20. Interacts with COX16 (By similarity).</text>
</comment>
<comment type="subcellular location">
    <subcellularLocation>
        <location evidence="3">Mitochondrion inner membrane</location>
        <topology evidence="3">Multi-pass membrane protein</topology>
    </subcellularLocation>
</comment>
<comment type="similarity">
    <text evidence="4">Belongs to the cytochrome c oxidase subunit 2 family.</text>
</comment>
<gene>
    <name type="primary">MT-CO2</name>
    <name type="synonym">COII</name>
    <name type="synonym">COX2</name>
    <name type="synonym">COXII</name>
    <name type="synonym">MTCO2</name>
</gene>
<dbReference type="EC" id="7.1.1.9"/>
<dbReference type="EMBL" id="M74008">
    <property type="protein sequence ID" value="AAA31642.1"/>
    <property type="molecule type" value="Genomic_DNA"/>
</dbReference>
<dbReference type="EMBL" id="Y18001">
    <property type="protein sequence ID" value="CAA76997.1"/>
    <property type="molecule type" value="Genomic_DNA"/>
</dbReference>
<dbReference type="PIR" id="I36925">
    <property type="entry name" value="I36925"/>
</dbReference>
<dbReference type="PIR" id="T11509">
    <property type="entry name" value="T11509"/>
</dbReference>
<dbReference type="RefSeq" id="NP_008461.1">
    <property type="nucleotide sequence ID" value="NC_001992.1"/>
</dbReference>
<dbReference type="SMR" id="P68298"/>
<dbReference type="GeneID" id="808325"/>
<dbReference type="CTD" id="4513"/>
<dbReference type="GO" id="GO:0005743">
    <property type="term" value="C:mitochondrial inner membrane"/>
    <property type="evidence" value="ECO:0007669"/>
    <property type="project" value="UniProtKB-SubCell"/>
</dbReference>
<dbReference type="GO" id="GO:0005739">
    <property type="term" value="C:mitochondrion"/>
    <property type="evidence" value="ECO:0000250"/>
    <property type="project" value="UniProtKB"/>
</dbReference>
<dbReference type="GO" id="GO:0045277">
    <property type="term" value="C:respiratory chain complex IV"/>
    <property type="evidence" value="ECO:0000250"/>
    <property type="project" value="UniProtKB"/>
</dbReference>
<dbReference type="GO" id="GO:0005507">
    <property type="term" value="F:copper ion binding"/>
    <property type="evidence" value="ECO:0007669"/>
    <property type="project" value="InterPro"/>
</dbReference>
<dbReference type="GO" id="GO:0004129">
    <property type="term" value="F:cytochrome-c oxidase activity"/>
    <property type="evidence" value="ECO:0007669"/>
    <property type="project" value="UniProtKB-EC"/>
</dbReference>
<dbReference type="GO" id="GO:0042773">
    <property type="term" value="P:ATP synthesis coupled electron transport"/>
    <property type="evidence" value="ECO:0007669"/>
    <property type="project" value="TreeGrafter"/>
</dbReference>
<dbReference type="CDD" id="cd13912">
    <property type="entry name" value="CcO_II_C"/>
    <property type="match status" value="1"/>
</dbReference>
<dbReference type="FunFam" id="1.10.287.90:FF:000001">
    <property type="entry name" value="Cytochrome c oxidase subunit 2"/>
    <property type="match status" value="1"/>
</dbReference>
<dbReference type="FunFam" id="2.60.40.420:FF:000001">
    <property type="entry name" value="Cytochrome c oxidase subunit 2"/>
    <property type="match status" value="1"/>
</dbReference>
<dbReference type="Gene3D" id="1.10.287.90">
    <property type="match status" value="1"/>
</dbReference>
<dbReference type="Gene3D" id="2.60.40.420">
    <property type="entry name" value="Cupredoxins - blue copper proteins"/>
    <property type="match status" value="1"/>
</dbReference>
<dbReference type="InterPro" id="IPR045187">
    <property type="entry name" value="CcO_II"/>
</dbReference>
<dbReference type="InterPro" id="IPR002429">
    <property type="entry name" value="CcO_II-like_C"/>
</dbReference>
<dbReference type="InterPro" id="IPR034210">
    <property type="entry name" value="CcO_II_C"/>
</dbReference>
<dbReference type="InterPro" id="IPR001505">
    <property type="entry name" value="Copper_CuA"/>
</dbReference>
<dbReference type="InterPro" id="IPR008972">
    <property type="entry name" value="Cupredoxin"/>
</dbReference>
<dbReference type="InterPro" id="IPR014222">
    <property type="entry name" value="Cyt_c_oxidase_su2"/>
</dbReference>
<dbReference type="InterPro" id="IPR011759">
    <property type="entry name" value="Cyt_c_oxidase_su2_TM_dom"/>
</dbReference>
<dbReference type="InterPro" id="IPR036257">
    <property type="entry name" value="Cyt_c_oxidase_su2_TM_sf"/>
</dbReference>
<dbReference type="NCBIfam" id="TIGR02866">
    <property type="entry name" value="CoxB"/>
    <property type="match status" value="1"/>
</dbReference>
<dbReference type="PANTHER" id="PTHR22888:SF9">
    <property type="entry name" value="CYTOCHROME C OXIDASE SUBUNIT 2"/>
    <property type="match status" value="1"/>
</dbReference>
<dbReference type="PANTHER" id="PTHR22888">
    <property type="entry name" value="CYTOCHROME C OXIDASE, SUBUNIT II"/>
    <property type="match status" value="1"/>
</dbReference>
<dbReference type="Pfam" id="PF00116">
    <property type="entry name" value="COX2"/>
    <property type="match status" value="1"/>
</dbReference>
<dbReference type="Pfam" id="PF02790">
    <property type="entry name" value="COX2_TM"/>
    <property type="match status" value="1"/>
</dbReference>
<dbReference type="PRINTS" id="PR01166">
    <property type="entry name" value="CYCOXIDASEII"/>
</dbReference>
<dbReference type="SUPFAM" id="SSF49503">
    <property type="entry name" value="Cupredoxins"/>
    <property type="match status" value="1"/>
</dbReference>
<dbReference type="SUPFAM" id="SSF81464">
    <property type="entry name" value="Cytochrome c oxidase subunit II-like, transmembrane region"/>
    <property type="match status" value="1"/>
</dbReference>
<dbReference type="PROSITE" id="PS00078">
    <property type="entry name" value="COX2"/>
    <property type="match status" value="1"/>
</dbReference>
<dbReference type="PROSITE" id="PS50857">
    <property type="entry name" value="COX2_CUA"/>
    <property type="match status" value="1"/>
</dbReference>
<dbReference type="PROSITE" id="PS50999">
    <property type="entry name" value="COX2_TM"/>
    <property type="match status" value="1"/>
</dbReference>
<sequence>MAHPVQLGLQDATSPVMEELITFHDQALMAMFLISFLILYALSSTLTTKLTNTNITDAQEMETIWTILPAVILILIALPSLRILYMTDEINNPSFTIKSIGHQWYWTYEYTDYGGLIFNSYMLPPLFLNPGDLRLLEVDNRVVLPIEAPVRMMITSQDVLHSWTIPTLGLKTDAVPGRLNQTVFTATRPGVYYGQCSEICGANHSFMPIVAELIPLKIFEMGPVFTL</sequence>
<accession>P68298</accession>
<accession>P98040</accession>
<accession>Q9ZXY1</accession>
<keyword id="KW-0186">Copper</keyword>
<keyword id="KW-0249">Electron transport</keyword>
<keyword id="KW-0460">Magnesium</keyword>
<keyword id="KW-0472">Membrane</keyword>
<keyword id="KW-0479">Metal-binding</keyword>
<keyword id="KW-0496">Mitochondrion</keyword>
<keyword id="KW-0999">Mitochondrion inner membrane</keyword>
<keyword id="KW-0679">Respiratory chain</keyword>
<keyword id="KW-1278">Translocase</keyword>
<keyword id="KW-0812">Transmembrane</keyword>
<keyword id="KW-1133">Transmembrane helix</keyword>
<keyword id="KW-0813">Transport</keyword>
<evidence type="ECO:0000250" key="1">
    <source>
        <dbReference type="UniProtKB" id="P00403"/>
    </source>
</evidence>
<evidence type="ECO:0000250" key="2">
    <source>
        <dbReference type="UniProtKB" id="P00410"/>
    </source>
</evidence>
<evidence type="ECO:0000250" key="3">
    <source>
        <dbReference type="UniProtKB" id="P68530"/>
    </source>
</evidence>
<evidence type="ECO:0000305" key="4"/>
<name>COX2_PAPHA</name>
<protein>
    <recommendedName>
        <fullName>Cytochrome c oxidase subunit 2</fullName>
        <ecNumber>7.1.1.9</ecNumber>
    </recommendedName>
    <alternativeName>
        <fullName>Cytochrome c oxidase polypeptide II</fullName>
    </alternativeName>
</protein>